<name>DTD_THEPX</name>
<dbReference type="EC" id="3.1.1.96" evidence="1"/>
<dbReference type="EMBL" id="CP000923">
    <property type="protein sequence ID" value="ABY92756.1"/>
    <property type="molecule type" value="Genomic_DNA"/>
</dbReference>
<dbReference type="RefSeq" id="WP_003868856.1">
    <property type="nucleotide sequence ID" value="NC_010320.1"/>
</dbReference>
<dbReference type="SMR" id="B0K0N1"/>
<dbReference type="KEGG" id="tex:Teth514_1469"/>
<dbReference type="HOGENOM" id="CLU_076901_1_0_9"/>
<dbReference type="Proteomes" id="UP000002155">
    <property type="component" value="Chromosome"/>
</dbReference>
<dbReference type="GO" id="GO:0005737">
    <property type="term" value="C:cytoplasm"/>
    <property type="evidence" value="ECO:0007669"/>
    <property type="project" value="UniProtKB-SubCell"/>
</dbReference>
<dbReference type="GO" id="GO:0051500">
    <property type="term" value="F:D-tyrosyl-tRNA(Tyr) deacylase activity"/>
    <property type="evidence" value="ECO:0007669"/>
    <property type="project" value="TreeGrafter"/>
</dbReference>
<dbReference type="GO" id="GO:0106026">
    <property type="term" value="F:Gly-tRNA(Ala) deacylase activity"/>
    <property type="evidence" value="ECO:0007669"/>
    <property type="project" value="UniProtKB-UniRule"/>
</dbReference>
<dbReference type="GO" id="GO:0043908">
    <property type="term" value="F:Ser(Gly)-tRNA(Ala) hydrolase activity"/>
    <property type="evidence" value="ECO:0007669"/>
    <property type="project" value="UniProtKB-UniRule"/>
</dbReference>
<dbReference type="GO" id="GO:0000049">
    <property type="term" value="F:tRNA binding"/>
    <property type="evidence" value="ECO:0007669"/>
    <property type="project" value="UniProtKB-UniRule"/>
</dbReference>
<dbReference type="GO" id="GO:0019478">
    <property type="term" value="P:D-amino acid catabolic process"/>
    <property type="evidence" value="ECO:0007669"/>
    <property type="project" value="UniProtKB-UniRule"/>
</dbReference>
<dbReference type="CDD" id="cd00563">
    <property type="entry name" value="Dtyr_deacylase"/>
    <property type="match status" value="1"/>
</dbReference>
<dbReference type="FunFam" id="3.50.80.10:FF:000001">
    <property type="entry name" value="D-aminoacyl-tRNA deacylase"/>
    <property type="match status" value="1"/>
</dbReference>
<dbReference type="Gene3D" id="3.50.80.10">
    <property type="entry name" value="D-tyrosyl-tRNA(Tyr) deacylase"/>
    <property type="match status" value="1"/>
</dbReference>
<dbReference type="HAMAP" id="MF_00518">
    <property type="entry name" value="Deacylase_Dtd"/>
    <property type="match status" value="1"/>
</dbReference>
<dbReference type="InterPro" id="IPR003732">
    <property type="entry name" value="Daa-tRNA_deacyls_DTD"/>
</dbReference>
<dbReference type="InterPro" id="IPR023509">
    <property type="entry name" value="DTD-like_sf"/>
</dbReference>
<dbReference type="NCBIfam" id="TIGR00256">
    <property type="entry name" value="D-aminoacyl-tRNA deacylase"/>
    <property type="match status" value="1"/>
</dbReference>
<dbReference type="PANTHER" id="PTHR10472:SF5">
    <property type="entry name" value="D-AMINOACYL-TRNA DEACYLASE 1"/>
    <property type="match status" value="1"/>
</dbReference>
<dbReference type="PANTHER" id="PTHR10472">
    <property type="entry name" value="D-TYROSYL-TRNA TYR DEACYLASE"/>
    <property type="match status" value="1"/>
</dbReference>
<dbReference type="Pfam" id="PF02580">
    <property type="entry name" value="Tyr_Deacylase"/>
    <property type="match status" value="1"/>
</dbReference>
<dbReference type="SUPFAM" id="SSF69500">
    <property type="entry name" value="DTD-like"/>
    <property type="match status" value="1"/>
</dbReference>
<comment type="function">
    <text evidence="1">An aminoacyl-tRNA editing enzyme that deacylates mischarged D-aminoacyl-tRNAs. Also deacylates mischarged glycyl-tRNA(Ala), protecting cells against glycine mischarging by AlaRS. Acts via tRNA-based rather than protein-based catalysis; rejects L-amino acids rather than detecting D-amino acids in the active site. By recycling D-aminoacyl-tRNA to D-amino acids and free tRNA molecules, this enzyme counteracts the toxicity associated with the formation of D-aminoacyl-tRNA entities in vivo and helps enforce protein L-homochirality.</text>
</comment>
<comment type="catalytic activity">
    <reaction evidence="1">
        <text>glycyl-tRNA(Ala) + H2O = tRNA(Ala) + glycine + H(+)</text>
        <dbReference type="Rhea" id="RHEA:53744"/>
        <dbReference type="Rhea" id="RHEA-COMP:9657"/>
        <dbReference type="Rhea" id="RHEA-COMP:13640"/>
        <dbReference type="ChEBI" id="CHEBI:15377"/>
        <dbReference type="ChEBI" id="CHEBI:15378"/>
        <dbReference type="ChEBI" id="CHEBI:57305"/>
        <dbReference type="ChEBI" id="CHEBI:78442"/>
        <dbReference type="ChEBI" id="CHEBI:78522"/>
        <dbReference type="EC" id="3.1.1.96"/>
    </reaction>
</comment>
<comment type="catalytic activity">
    <reaction evidence="1">
        <text>a D-aminoacyl-tRNA + H2O = a tRNA + a D-alpha-amino acid + H(+)</text>
        <dbReference type="Rhea" id="RHEA:13953"/>
        <dbReference type="Rhea" id="RHEA-COMP:10123"/>
        <dbReference type="Rhea" id="RHEA-COMP:10124"/>
        <dbReference type="ChEBI" id="CHEBI:15377"/>
        <dbReference type="ChEBI" id="CHEBI:15378"/>
        <dbReference type="ChEBI" id="CHEBI:59871"/>
        <dbReference type="ChEBI" id="CHEBI:78442"/>
        <dbReference type="ChEBI" id="CHEBI:79333"/>
        <dbReference type="EC" id="3.1.1.96"/>
    </reaction>
</comment>
<comment type="subunit">
    <text evidence="1">Homodimer.</text>
</comment>
<comment type="subcellular location">
    <subcellularLocation>
        <location evidence="1">Cytoplasm</location>
    </subcellularLocation>
</comment>
<comment type="domain">
    <text evidence="1">A Gly-cisPro motif from one monomer fits into the active site of the other monomer to allow specific chiral rejection of L-amino acids.</text>
</comment>
<comment type="similarity">
    <text evidence="1">Belongs to the DTD family.</text>
</comment>
<gene>
    <name evidence="1" type="primary">dtd</name>
    <name type="ordered locus">Teth514_1469</name>
</gene>
<reference key="1">
    <citation type="submission" date="2008-01" db="EMBL/GenBank/DDBJ databases">
        <title>Complete sequence of Thermoanaerobacter sp. X514.</title>
        <authorList>
            <consortium name="US DOE Joint Genome Institute"/>
            <person name="Copeland A."/>
            <person name="Lucas S."/>
            <person name="Lapidus A."/>
            <person name="Barry K."/>
            <person name="Glavina del Rio T."/>
            <person name="Dalin E."/>
            <person name="Tice H."/>
            <person name="Pitluck S."/>
            <person name="Bruce D."/>
            <person name="Goodwin L."/>
            <person name="Saunders E."/>
            <person name="Brettin T."/>
            <person name="Detter J.C."/>
            <person name="Han C."/>
            <person name="Schmutz J."/>
            <person name="Larimer F."/>
            <person name="Land M."/>
            <person name="Hauser L."/>
            <person name="Kyrpides N."/>
            <person name="Kim E."/>
            <person name="Hemme C."/>
            <person name="Fields M.W."/>
            <person name="He Z."/>
            <person name="Zhou J."/>
            <person name="Richardson P."/>
        </authorList>
    </citation>
    <scope>NUCLEOTIDE SEQUENCE [LARGE SCALE GENOMIC DNA]</scope>
    <source>
        <strain>X514</strain>
    </source>
</reference>
<organism>
    <name type="scientific">Thermoanaerobacter sp. (strain X514)</name>
    <dbReference type="NCBI Taxonomy" id="399726"/>
    <lineage>
        <taxon>Bacteria</taxon>
        <taxon>Bacillati</taxon>
        <taxon>Bacillota</taxon>
        <taxon>Clostridia</taxon>
        <taxon>Thermoanaerobacterales</taxon>
        <taxon>Thermoanaerobacteraceae</taxon>
        <taxon>Thermoanaerobacter</taxon>
    </lineage>
</organism>
<proteinExistence type="inferred from homology"/>
<evidence type="ECO:0000255" key="1">
    <source>
        <dbReference type="HAMAP-Rule" id="MF_00518"/>
    </source>
</evidence>
<accession>B0K0N1</accession>
<sequence length="149" mass="16636">MRAVVQRVIRGEVSVDGEVISSIGKGFVVLVGISVDDNENDVMYMADKIVNLRVFEDEEGKMNLSLLDIGGEVLLVSQFTLLGDVRKGRRPNFMMAQKPEEALKYFNLLVNEIEKRGVSVKTGKFQAMMKVLIENDGPVTILIDSKKIF</sequence>
<keyword id="KW-0963">Cytoplasm</keyword>
<keyword id="KW-0378">Hydrolase</keyword>
<keyword id="KW-0694">RNA-binding</keyword>
<keyword id="KW-0820">tRNA-binding</keyword>
<protein>
    <recommendedName>
        <fullName evidence="1">D-aminoacyl-tRNA deacylase</fullName>
        <shortName evidence="1">DTD</shortName>
        <ecNumber evidence="1">3.1.1.96</ecNumber>
    </recommendedName>
    <alternativeName>
        <fullName evidence="1">Gly-tRNA(Ala) deacylase</fullName>
    </alternativeName>
</protein>
<feature type="chain" id="PRO_1000127588" description="D-aminoacyl-tRNA deacylase">
    <location>
        <begin position="1"/>
        <end position="149"/>
    </location>
</feature>
<feature type="short sequence motif" description="Gly-cisPro motif, important for rejection of L-amino acids" evidence="1">
    <location>
        <begin position="137"/>
        <end position="138"/>
    </location>
</feature>